<reference key="1">
    <citation type="submission" date="2006-08" db="EMBL/GenBank/DDBJ databases">
        <title>Complete sequence of chromosome 1 of Burkholderia cepacia AMMD.</title>
        <authorList>
            <person name="Copeland A."/>
            <person name="Lucas S."/>
            <person name="Lapidus A."/>
            <person name="Barry K."/>
            <person name="Detter J.C."/>
            <person name="Glavina del Rio T."/>
            <person name="Hammon N."/>
            <person name="Israni S."/>
            <person name="Pitluck S."/>
            <person name="Bruce D."/>
            <person name="Chain P."/>
            <person name="Malfatti S."/>
            <person name="Shin M."/>
            <person name="Vergez L."/>
            <person name="Schmutz J."/>
            <person name="Larimer F."/>
            <person name="Land M."/>
            <person name="Hauser L."/>
            <person name="Kyrpides N."/>
            <person name="Kim E."/>
            <person name="Parke J."/>
            <person name="Coenye T."/>
            <person name="Konstantinidis K."/>
            <person name="Ramette A."/>
            <person name="Tiedje J."/>
            <person name="Richardson P."/>
        </authorList>
    </citation>
    <scope>NUCLEOTIDE SEQUENCE [LARGE SCALE GENOMIC DNA]</scope>
    <source>
        <strain>ATCC BAA-244 / DSM 16087 / CCUG 44356 / LMG 19182 / AMMD</strain>
    </source>
</reference>
<evidence type="ECO:0000255" key="1">
    <source>
        <dbReference type="HAMAP-Rule" id="MF_00394"/>
    </source>
</evidence>
<protein>
    <recommendedName>
        <fullName evidence="1">Glycerol-3-phosphate dehydrogenase [NAD(P)+]</fullName>
        <ecNumber evidence="1">1.1.1.94</ecNumber>
    </recommendedName>
    <alternativeName>
        <fullName evidence="1">NAD(P)(+)-dependent glycerol-3-phosphate dehydrogenase</fullName>
    </alternativeName>
    <alternativeName>
        <fullName evidence="1">NAD(P)H-dependent dihydroxyacetone-phosphate reductase</fullName>
    </alternativeName>
</protein>
<name>GPDA_BURCM</name>
<organism>
    <name type="scientific">Burkholderia ambifaria (strain ATCC BAA-244 / DSM 16087 / CCUG 44356 / LMG 19182 / AMMD)</name>
    <name type="common">Burkholderia cepacia (strain AMMD)</name>
    <dbReference type="NCBI Taxonomy" id="339670"/>
    <lineage>
        <taxon>Bacteria</taxon>
        <taxon>Pseudomonadati</taxon>
        <taxon>Pseudomonadota</taxon>
        <taxon>Betaproteobacteria</taxon>
        <taxon>Burkholderiales</taxon>
        <taxon>Burkholderiaceae</taxon>
        <taxon>Burkholderia</taxon>
        <taxon>Burkholderia cepacia complex</taxon>
    </lineage>
</organism>
<sequence>MKVAVLGAGAWGTALAGHLAARHDTLLWARDAALIAGLQARHENSRYLDGIALPDALRYDADLGAALAHGAADDALCVIAAPVAGLRTLFGAMRDAGCVPAHVVWVCKGFEADTHLLPHQVIAAELPGQHSNGVLSGPSFAREVGLALPVALTVASTSAECRERTLAAFHHGAMRIYTGDDVVGVEVGGAVKNVLAIATGIADGLGLGLNARAALVTRGLAEMSRLGVALGGRAETFTGLTGLGDLILTATGDLSRNRTVGLQLAAGRSLNDILGALGHVAEGVRCAQAVLALARAQSIEMPITEAVCGVLFDGVAPRDAVSGLLRRDARAE</sequence>
<feature type="chain" id="PRO_1000049487" description="Glycerol-3-phosphate dehydrogenase [NAD(P)+]">
    <location>
        <begin position="1"/>
        <end position="332"/>
    </location>
</feature>
<feature type="active site" description="Proton acceptor" evidence="1">
    <location>
        <position position="192"/>
    </location>
</feature>
<feature type="binding site" evidence="1">
    <location>
        <position position="11"/>
    </location>
    <ligand>
        <name>NADPH</name>
        <dbReference type="ChEBI" id="CHEBI:57783"/>
    </ligand>
</feature>
<feature type="binding site" evidence="1">
    <location>
        <position position="30"/>
    </location>
    <ligand>
        <name>NADPH</name>
        <dbReference type="ChEBI" id="CHEBI:57783"/>
    </ligand>
</feature>
<feature type="binding site" evidence="1">
    <location>
        <position position="108"/>
    </location>
    <ligand>
        <name>NADPH</name>
        <dbReference type="ChEBI" id="CHEBI:57783"/>
    </ligand>
</feature>
<feature type="binding site" evidence="1">
    <location>
        <position position="108"/>
    </location>
    <ligand>
        <name>sn-glycerol 3-phosphate</name>
        <dbReference type="ChEBI" id="CHEBI:57597"/>
    </ligand>
</feature>
<feature type="binding site" evidence="1">
    <location>
        <position position="137"/>
    </location>
    <ligand>
        <name>sn-glycerol 3-phosphate</name>
        <dbReference type="ChEBI" id="CHEBI:57597"/>
    </ligand>
</feature>
<feature type="binding site" evidence="1">
    <location>
        <position position="139"/>
    </location>
    <ligand>
        <name>sn-glycerol 3-phosphate</name>
        <dbReference type="ChEBI" id="CHEBI:57597"/>
    </ligand>
</feature>
<feature type="binding site" evidence="1">
    <location>
        <position position="141"/>
    </location>
    <ligand>
        <name>NADPH</name>
        <dbReference type="ChEBI" id="CHEBI:57783"/>
    </ligand>
</feature>
<feature type="binding site" evidence="1">
    <location>
        <position position="192"/>
    </location>
    <ligand>
        <name>sn-glycerol 3-phosphate</name>
        <dbReference type="ChEBI" id="CHEBI:57597"/>
    </ligand>
</feature>
<feature type="binding site" evidence="1">
    <location>
        <position position="245"/>
    </location>
    <ligand>
        <name>sn-glycerol 3-phosphate</name>
        <dbReference type="ChEBI" id="CHEBI:57597"/>
    </ligand>
</feature>
<feature type="binding site" evidence="1">
    <location>
        <position position="255"/>
    </location>
    <ligand>
        <name>sn-glycerol 3-phosphate</name>
        <dbReference type="ChEBI" id="CHEBI:57597"/>
    </ligand>
</feature>
<feature type="binding site" evidence="1">
    <location>
        <position position="256"/>
    </location>
    <ligand>
        <name>NADPH</name>
        <dbReference type="ChEBI" id="CHEBI:57783"/>
    </ligand>
</feature>
<feature type="binding site" evidence="1">
    <location>
        <position position="256"/>
    </location>
    <ligand>
        <name>sn-glycerol 3-phosphate</name>
        <dbReference type="ChEBI" id="CHEBI:57597"/>
    </ligand>
</feature>
<feature type="binding site" evidence="1">
    <location>
        <position position="257"/>
    </location>
    <ligand>
        <name>sn-glycerol 3-phosphate</name>
        <dbReference type="ChEBI" id="CHEBI:57597"/>
    </ligand>
</feature>
<feature type="binding site" evidence="1">
    <location>
        <position position="280"/>
    </location>
    <ligand>
        <name>NADPH</name>
        <dbReference type="ChEBI" id="CHEBI:57783"/>
    </ligand>
</feature>
<feature type="binding site" evidence="1">
    <location>
        <position position="282"/>
    </location>
    <ligand>
        <name>NADPH</name>
        <dbReference type="ChEBI" id="CHEBI:57783"/>
    </ligand>
</feature>
<keyword id="KW-0963">Cytoplasm</keyword>
<keyword id="KW-0444">Lipid biosynthesis</keyword>
<keyword id="KW-0443">Lipid metabolism</keyword>
<keyword id="KW-0520">NAD</keyword>
<keyword id="KW-0521">NADP</keyword>
<keyword id="KW-0547">Nucleotide-binding</keyword>
<keyword id="KW-0560">Oxidoreductase</keyword>
<keyword id="KW-0594">Phospholipid biosynthesis</keyword>
<keyword id="KW-1208">Phospholipid metabolism</keyword>
<dbReference type="EC" id="1.1.1.94" evidence="1"/>
<dbReference type="EMBL" id="CP000440">
    <property type="protein sequence ID" value="ABI88464.1"/>
    <property type="molecule type" value="Genomic_DNA"/>
</dbReference>
<dbReference type="RefSeq" id="WP_006752067.1">
    <property type="nucleotide sequence ID" value="NZ_CP009798.1"/>
</dbReference>
<dbReference type="SMR" id="Q0BBK9"/>
<dbReference type="KEGG" id="bam:Bamb_2908"/>
<dbReference type="PATRIC" id="fig|339670.21.peg.1972"/>
<dbReference type="eggNOG" id="COG0240">
    <property type="taxonomic scope" value="Bacteria"/>
</dbReference>
<dbReference type="UniPathway" id="UPA00940"/>
<dbReference type="Proteomes" id="UP000000662">
    <property type="component" value="Chromosome 1"/>
</dbReference>
<dbReference type="GO" id="GO:0005829">
    <property type="term" value="C:cytosol"/>
    <property type="evidence" value="ECO:0007669"/>
    <property type="project" value="TreeGrafter"/>
</dbReference>
<dbReference type="GO" id="GO:0047952">
    <property type="term" value="F:glycerol-3-phosphate dehydrogenase [NAD(P)+] activity"/>
    <property type="evidence" value="ECO:0007669"/>
    <property type="project" value="UniProtKB-UniRule"/>
</dbReference>
<dbReference type="GO" id="GO:0051287">
    <property type="term" value="F:NAD binding"/>
    <property type="evidence" value="ECO:0007669"/>
    <property type="project" value="InterPro"/>
</dbReference>
<dbReference type="GO" id="GO:0005975">
    <property type="term" value="P:carbohydrate metabolic process"/>
    <property type="evidence" value="ECO:0007669"/>
    <property type="project" value="InterPro"/>
</dbReference>
<dbReference type="GO" id="GO:0046167">
    <property type="term" value="P:glycerol-3-phosphate biosynthetic process"/>
    <property type="evidence" value="ECO:0007669"/>
    <property type="project" value="UniProtKB-UniRule"/>
</dbReference>
<dbReference type="GO" id="GO:0046168">
    <property type="term" value="P:glycerol-3-phosphate catabolic process"/>
    <property type="evidence" value="ECO:0007669"/>
    <property type="project" value="InterPro"/>
</dbReference>
<dbReference type="GO" id="GO:0006650">
    <property type="term" value="P:glycerophospholipid metabolic process"/>
    <property type="evidence" value="ECO:0007669"/>
    <property type="project" value="UniProtKB-UniRule"/>
</dbReference>
<dbReference type="GO" id="GO:0008654">
    <property type="term" value="P:phospholipid biosynthetic process"/>
    <property type="evidence" value="ECO:0007669"/>
    <property type="project" value="UniProtKB-KW"/>
</dbReference>
<dbReference type="FunFam" id="1.10.1040.10:FF:000001">
    <property type="entry name" value="Glycerol-3-phosphate dehydrogenase [NAD(P)+]"/>
    <property type="match status" value="1"/>
</dbReference>
<dbReference type="FunFam" id="3.40.50.720:FF:000019">
    <property type="entry name" value="Glycerol-3-phosphate dehydrogenase [NAD(P)+]"/>
    <property type="match status" value="1"/>
</dbReference>
<dbReference type="Gene3D" id="1.10.1040.10">
    <property type="entry name" value="N-(1-d-carboxylethyl)-l-norvaline Dehydrogenase, domain 2"/>
    <property type="match status" value="1"/>
</dbReference>
<dbReference type="Gene3D" id="3.40.50.720">
    <property type="entry name" value="NAD(P)-binding Rossmann-like Domain"/>
    <property type="match status" value="1"/>
</dbReference>
<dbReference type="HAMAP" id="MF_00394">
    <property type="entry name" value="NAD_Glyc3P_dehydrog"/>
    <property type="match status" value="1"/>
</dbReference>
<dbReference type="InterPro" id="IPR008927">
    <property type="entry name" value="6-PGluconate_DH-like_C_sf"/>
</dbReference>
<dbReference type="InterPro" id="IPR013328">
    <property type="entry name" value="6PGD_dom2"/>
</dbReference>
<dbReference type="InterPro" id="IPR006168">
    <property type="entry name" value="G3P_DH_NAD-dep"/>
</dbReference>
<dbReference type="InterPro" id="IPR006109">
    <property type="entry name" value="G3P_DH_NAD-dep_C"/>
</dbReference>
<dbReference type="InterPro" id="IPR011128">
    <property type="entry name" value="G3P_DH_NAD-dep_N"/>
</dbReference>
<dbReference type="InterPro" id="IPR036291">
    <property type="entry name" value="NAD(P)-bd_dom_sf"/>
</dbReference>
<dbReference type="NCBIfam" id="NF000940">
    <property type="entry name" value="PRK00094.1-2"/>
    <property type="match status" value="1"/>
</dbReference>
<dbReference type="NCBIfam" id="NF000942">
    <property type="entry name" value="PRK00094.1-4"/>
    <property type="match status" value="1"/>
</dbReference>
<dbReference type="PANTHER" id="PTHR11728">
    <property type="entry name" value="GLYCEROL-3-PHOSPHATE DEHYDROGENASE"/>
    <property type="match status" value="1"/>
</dbReference>
<dbReference type="PANTHER" id="PTHR11728:SF1">
    <property type="entry name" value="GLYCEROL-3-PHOSPHATE DEHYDROGENASE [NAD(+)] 2, CHLOROPLASTIC"/>
    <property type="match status" value="1"/>
</dbReference>
<dbReference type="Pfam" id="PF07479">
    <property type="entry name" value="NAD_Gly3P_dh_C"/>
    <property type="match status" value="1"/>
</dbReference>
<dbReference type="Pfam" id="PF01210">
    <property type="entry name" value="NAD_Gly3P_dh_N"/>
    <property type="match status" value="1"/>
</dbReference>
<dbReference type="PIRSF" id="PIRSF000114">
    <property type="entry name" value="Glycerol-3-P_dh"/>
    <property type="match status" value="1"/>
</dbReference>
<dbReference type="PRINTS" id="PR00077">
    <property type="entry name" value="GPDHDRGNASE"/>
</dbReference>
<dbReference type="SUPFAM" id="SSF48179">
    <property type="entry name" value="6-phosphogluconate dehydrogenase C-terminal domain-like"/>
    <property type="match status" value="1"/>
</dbReference>
<dbReference type="SUPFAM" id="SSF51735">
    <property type="entry name" value="NAD(P)-binding Rossmann-fold domains"/>
    <property type="match status" value="1"/>
</dbReference>
<dbReference type="PROSITE" id="PS00957">
    <property type="entry name" value="NAD_G3PDH"/>
    <property type="match status" value="1"/>
</dbReference>
<proteinExistence type="inferred from homology"/>
<accession>Q0BBK9</accession>
<gene>
    <name evidence="1" type="primary">gpsA</name>
    <name type="ordered locus">Bamb_2908</name>
</gene>
<comment type="function">
    <text evidence="1">Catalyzes the reduction of the glycolytic intermediate dihydroxyacetone phosphate (DHAP) to sn-glycerol 3-phosphate (G3P), the key precursor for phospholipid synthesis.</text>
</comment>
<comment type="catalytic activity">
    <reaction evidence="1">
        <text>sn-glycerol 3-phosphate + NAD(+) = dihydroxyacetone phosphate + NADH + H(+)</text>
        <dbReference type="Rhea" id="RHEA:11092"/>
        <dbReference type="ChEBI" id="CHEBI:15378"/>
        <dbReference type="ChEBI" id="CHEBI:57540"/>
        <dbReference type="ChEBI" id="CHEBI:57597"/>
        <dbReference type="ChEBI" id="CHEBI:57642"/>
        <dbReference type="ChEBI" id="CHEBI:57945"/>
        <dbReference type="EC" id="1.1.1.94"/>
    </reaction>
    <physiologicalReaction direction="right-to-left" evidence="1">
        <dbReference type="Rhea" id="RHEA:11094"/>
    </physiologicalReaction>
</comment>
<comment type="catalytic activity">
    <reaction evidence="1">
        <text>sn-glycerol 3-phosphate + NADP(+) = dihydroxyacetone phosphate + NADPH + H(+)</text>
        <dbReference type="Rhea" id="RHEA:11096"/>
        <dbReference type="ChEBI" id="CHEBI:15378"/>
        <dbReference type="ChEBI" id="CHEBI:57597"/>
        <dbReference type="ChEBI" id="CHEBI:57642"/>
        <dbReference type="ChEBI" id="CHEBI:57783"/>
        <dbReference type="ChEBI" id="CHEBI:58349"/>
        <dbReference type="EC" id="1.1.1.94"/>
    </reaction>
    <physiologicalReaction direction="right-to-left" evidence="1">
        <dbReference type="Rhea" id="RHEA:11098"/>
    </physiologicalReaction>
</comment>
<comment type="pathway">
    <text evidence="1">Membrane lipid metabolism; glycerophospholipid metabolism.</text>
</comment>
<comment type="subcellular location">
    <subcellularLocation>
        <location evidence="1">Cytoplasm</location>
    </subcellularLocation>
</comment>
<comment type="similarity">
    <text evidence="1">Belongs to the NAD-dependent glycerol-3-phosphate dehydrogenase family.</text>
</comment>